<evidence type="ECO:0000255" key="1">
    <source>
        <dbReference type="HAMAP-Rule" id="MF_00295"/>
    </source>
</evidence>
<feature type="chain" id="PRO_1000191180" description="Homoserine O-acetyltransferase">
    <location>
        <begin position="1"/>
        <end position="301"/>
    </location>
</feature>
<feature type="active site" description="Acyl-thioester intermediate" evidence="1">
    <location>
        <position position="142"/>
    </location>
</feature>
<feature type="active site" description="Proton acceptor" evidence="1">
    <location>
        <position position="235"/>
    </location>
</feature>
<feature type="active site" evidence="1">
    <location>
        <position position="237"/>
    </location>
</feature>
<feature type="binding site" evidence="1">
    <location>
        <position position="163"/>
    </location>
    <ligand>
        <name>substrate</name>
    </ligand>
</feature>
<feature type="binding site" evidence="1">
    <location>
        <position position="192"/>
    </location>
    <ligand>
        <name>substrate</name>
    </ligand>
</feature>
<feature type="binding site" evidence="1">
    <location>
        <position position="249"/>
    </location>
    <ligand>
        <name>substrate</name>
    </ligand>
</feature>
<feature type="site" description="Important for acyl-CoA specificity" evidence="1">
    <location>
        <position position="111"/>
    </location>
</feature>
<feature type="site" description="Important for substrate specificity" evidence="1">
    <location>
        <position position="192"/>
    </location>
</feature>
<comment type="function">
    <text evidence="1">Transfers an acetyl group from acetyl-CoA to L-homoserine, forming acetyl-L-homoserine.</text>
</comment>
<comment type="catalytic activity">
    <reaction evidence="1">
        <text>L-homoserine + acetyl-CoA = O-acetyl-L-homoserine + CoA</text>
        <dbReference type="Rhea" id="RHEA:13701"/>
        <dbReference type="ChEBI" id="CHEBI:57287"/>
        <dbReference type="ChEBI" id="CHEBI:57288"/>
        <dbReference type="ChEBI" id="CHEBI:57476"/>
        <dbReference type="ChEBI" id="CHEBI:57716"/>
        <dbReference type="EC" id="2.3.1.31"/>
    </reaction>
</comment>
<comment type="pathway">
    <text evidence="1">Amino-acid biosynthesis; L-methionine biosynthesis via de novo pathway; O-acetyl-L-homoserine from L-homoserine: step 1/1.</text>
</comment>
<comment type="subcellular location">
    <subcellularLocation>
        <location evidence="1">Cytoplasm</location>
    </subcellularLocation>
</comment>
<comment type="similarity">
    <text evidence="1">Belongs to the MetA family.</text>
</comment>
<reference key="1">
    <citation type="submission" date="2009-04" db="EMBL/GenBank/DDBJ databases">
        <title>Genome sequence of Bacillus anthracis A0248.</title>
        <authorList>
            <person name="Dodson R.J."/>
            <person name="Munk A.C."/>
            <person name="Bruce D."/>
            <person name="Detter C."/>
            <person name="Tapia R."/>
            <person name="Sutton G."/>
            <person name="Sims D."/>
            <person name="Brettin T."/>
        </authorList>
    </citation>
    <scope>NUCLEOTIDE SEQUENCE [LARGE SCALE GENOMIC DNA]</scope>
    <source>
        <strain>A0248</strain>
    </source>
</reference>
<organism>
    <name type="scientific">Bacillus anthracis (strain A0248)</name>
    <dbReference type="NCBI Taxonomy" id="592021"/>
    <lineage>
        <taxon>Bacteria</taxon>
        <taxon>Bacillati</taxon>
        <taxon>Bacillota</taxon>
        <taxon>Bacilli</taxon>
        <taxon>Bacillales</taxon>
        <taxon>Bacillaceae</taxon>
        <taxon>Bacillus</taxon>
        <taxon>Bacillus cereus group</taxon>
    </lineage>
</organism>
<keyword id="KW-0012">Acyltransferase</keyword>
<keyword id="KW-0028">Amino-acid biosynthesis</keyword>
<keyword id="KW-0963">Cytoplasm</keyword>
<keyword id="KW-0486">Methionine biosynthesis</keyword>
<keyword id="KW-0808">Transferase</keyword>
<sequence>MPIIIDKDLPARKVLQEENIFVMTKERAETQDIRALKIAILNLMPTKQETEAQLLRLIGNTPLQLDVHLLHMESHLSRNVAQEHLTSFYKTFRDIENEKFDGLIITGAPVETLSFEEVDYWEELKRIMEYSKTNVTSTLHICWGAQAGLYYHYGVPKYPLKEKMFGVFEHEVREQHVKLLQGFDELFFAPHSRHTEVRENDIRGVKELTLLANSEEAGVHLVIGPEGRQVFALGHSEYSCDTLKQEYERDRQKGLNIDVPKNYFKHNNPNEKPLVRWRSHGNLLFSNWLNYYVYQETPYVL</sequence>
<accession>C3P2G5</accession>
<name>METAA_BACAA</name>
<gene>
    <name evidence="1" type="primary">metAA</name>
    <name type="ordered locus">BAA_5682</name>
</gene>
<protein>
    <recommendedName>
        <fullName evidence="1">Homoserine O-acetyltransferase</fullName>
        <shortName evidence="1">HAT</shortName>
        <ecNumber evidence="1">2.3.1.31</ecNumber>
    </recommendedName>
    <alternativeName>
        <fullName evidence="1">Homoserine transacetylase</fullName>
        <shortName evidence="1">HTA</shortName>
    </alternativeName>
</protein>
<dbReference type="EC" id="2.3.1.31" evidence="1"/>
<dbReference type="EMBL" id="CP001598">
    <property type="protein sequence ID" value="ACQ50248.1"/>
    <property type="molecule type" value="Genomic_DNA"/>
</dbReference>
<dbReference type="RefSeq" id="WP_001121524.1">
    <property type="nucleotide sequence ID" value="NC_012659.1"/>
</dbReference>
<dbReference type="SMR" id="C3P2G5"/>
<dbReference type="GeneID" id="45025232"/>
<dbReference type="KEGG" id="bai:BAA_5682"/>
<dbReference type="HOGENOM" id="CLU_057851_0_1_9"/>
<dbReference type="UniPathway" id="UPA00051">
    <property type="reaction ID" value="UER00074"/>
</dbReference>
<dbReference type="GO" id="GO:0005737">
    <property type="term" value="C:cytoplasm"/>
    <property type="evidence" value="ECO:0007669"/>
    <property type="project" value="UniProtKB-SubCell"/>
</dbReference>
<dbReference type="GO" id="GO:0004414">
    <property type="term" value="F:homoserine O-acetyltransferase activity"/>
    <property type="evidence" value="ECO:0007669"/>
    <property type="project" value="UniProtKB-EC"/>
</dbReference>
<dbReference type="GO" id="GO:0008899">
    <property type="term" value="F:homoserine O-succinyltransferase activity"/>
    <property type="evidence" value="ECO:0007669"/>
    <property type="project" value="UniProtKB-UniRule"/>
</dbReference>
<dbReference type="GO" id="GO:0019281">
    <property type="term" value="P:L-methionine biosynthetic process from homoserine via O-succinyl-L-homoserine and cystathionine"/>
    <property type="evidence" value="ECO:0007669"/>
    <property type="project" value="InterPro"/>
</dbReference>
<dbReference type="CDD" id="cd03131">
    <property type="entry name" value="GATase1_HTS"/>
    <property type="match status" value="1"/>
</dbReference>
<dbReference type="FunFam" id="3.40.50.880:FF:000004">
    <property type="entry name" value="Homoserine O-succinyltransferase"/>
    <property type="match status" value="1"/>
</dbReference>
<dbReference type="Gene3D" id="3.40.50.880">
    <property type="match status" value="1"/>
</dbReference>
<dbReference type="HAMAP" id="MF_00295">
    <property type="entry name" value="MetA_acyltransf"/>
    <property type="match status" value="1"/>
</dbReference>
<dbReference type="InterPro" id="IPR029062">
    <property type="entry name" value="Class_I_gatase-like"/>
</dbReference>
<dbReference type="InterPro" id="IPR005697">
    <property type="entry name" value="HST_MetA"/>
</dbReference>
<dbReference type="InterPro" id="IPR033752">
    <property type="entry name" value="MetA_family"/>
</dbReference>
<dbReference type="NCBIfam" id="TIGR01001">
    <property type="entry name" value="metA"/>
    <property type="match status" value="1"/>
</dbReference>
<dbReference type="PANTHER" id="PTHR20919">
    <property type="entry name" value="HOMOSERINE O-SUCCINYLTRANSFERASE"/>
    <property type="match status" value="1"/>
</dbReference>
<dbReference type="PANTHER" id="PTHR20919:SF0">
    <property type="entry name" value="HOMOSERINE O-SUCCINYLTRANSFERASE"/>
    <property type="match status" value="1"/>
</dbReference>
<dbReference type="Pfam" id="PF04204">
    <property type="entry name" value="HTS"/>
    <property type="match status" value="1"/>
</dbReference>
<dbReference type="PIRSF" id="PIRSF000450">
    <property type="entry name" value="H_ser_succinyltr"/>
    <property type="match status" value="1"/>
</dbReference>
<dbReference type="SUPFAM" id="SSF52317">
    <property type="entry name" value="Class I glutamine amidotransferase-like"/>
    <property type="match status" value="1"/>
</dbReference>
<proteinExistence type="inferred from homology"/>